<reference key="1">
    <citation type="journal article" date="2004" name="Nat. Biotechnol.">
        <title>The genome sequence of the extreme thermophile Thermus thermophilus.</title>
        <authorList>
            <person name="Henne A."/>
            <person name="Brueggemann H."/>
            <person name="Raasch C."/>
            <person name="Wiezer A."/>
            <person name="Hartsch T."/>
            <person name="Liesegang H."/>
            <person name="Johann A."/>
            <person name="Lienard T."/>
            <person name="Gohl O."/>
            <person name="Martinez-Arias R."/>
            <person name="Jacobi C."/>
            <person name="Starkuviene V."/>
            <person name="Schlenczeck S."/>
            <person name="Dencker S."/>
            <person name="Huber R."/>
            <person name="Klenk H.-P."/>
            <person name="Kramer W."/>
            <person name="Merkl R."/>
            <person name="Gottschalk G."/>
            <person name="Fritz H.-J."/>
        </authorList>
    </citation>
    <scope>NUCLEOTIDE SEQUENCE [LARGE SCALE GENOMIC DNA]</scope>
    <source>
        <strain>ATCC BAA-163 / DSM 7039 / HB27</strain>
    </source>
</reference>
<keyword id="KW-0963">Cytoplasm</keyword>
<keyword id="KW-0227">DNA damage</keyword>
<keyword id="KW-0233">DNA recombination</keyword>
<keyword id="KW-0234">DNA repair</keyword>
<keyword id="KW-0238">DNA-binding</keyword>
<feature type="chain" id="PRO_0000224919" description="Holliday junction branch migration complex subunit RuvA">
    <location>
        <begin position="1"/>
        <end position="191"/>
    </location>
</feature>
<feature type="region of interest" description="Domain I" evidence="1">
    <location>
        <begin position="1"/>
        <end position="63"/>
    </location>
</feature>
<feature type="region of interest" description="Domain II" evidence="1">
    <location>
        <begin position="64"/>
        <end position="136"/>
    </location>
</feature>
<feature type="region of interest" description="Flexible linker" evidence="1">
    <location>
        <begin position="136"/>
        <end position="140"/>
    </location>
</feature>
<feature type="region of interest" description="Domain III" evidence="1">
    <location>
        <begin position="141"/>
        <end position="191"/>
    </location>
</feature>
<accession>Q72GZ9</accession>
<evidence type="ECO:0000255" key="1">
    <source>
        <dbReference type="HAMAP-Rule" id="MF_00031"/>
    </source>
</evidence>
<comment type="function">
    <text evidence="1">The RuvA-RuvB-RuvC complex processes Holliday junction (HJ) DNA during genetic recombination and DNA repair, while the RuvA-RuvB complex plays an important role in the rescue of blocked DNA replication forks via replication fork reversal (RFR). RuvA specifically binds to HJ cruciform DNA, conferring on it an open structure. The RuvB hexamer acts as an ATP-dependent pump, pulling dsDNA into and through the RuvAB complex. HJ branch migration allows RuvC to scan DNA until it finds its consensus sequence, where it cleaves and resolves the cruciform DNA.</text>
</comment>
<comment type="subunit">
    <text evidence="1">Homotetramer. Forms an RuvA(8)-RuvB(12)-Holliday junction (HJ) complex. HJ DNA is sandwiched between 2 RuvA tetramers; dsDNA enters through RuvA and exits via RuvB. An RuvB hexamer assembles on each DNA strand where it exits the tetramer. Each RuvB hexamer is contacted by two RuvA subunits (via domain III) on 2 adjacent RuvB subunits; this complex drives branch migration. In the full resolvosome a probable DNA-RuvA(4)-RuvB(12)-RuvC(2) complex forms which resolves the HJ.</text>
</comment>
<comment type="subcellular location">
    <subcellularLocation>
        <location evidence="1">Cytoplasm</location>
    </subcellularLocation>
</comment>
<comment type="domain">
    <text evidence="1">Has three domains with a flexible linker between the domains II and III and assumes an 'L' shape. Domain III is highly mobile and contacts RuvB.</text>
</comment>
<comment type="similarity">
    <text evidence="1">Belongs to the RuvA family.</text>
</comment>
<name>RUVA_THET2</name>
<sequence>MIRYLRGLVLKKEAGGFVLLAGGVGFFLQAPTPFLQALEEGKEVGVHTHLLLKEEGLSLYGFPDEENLALFELLLSVSGVGPKVALALLSALPPRLLARALLEGDARLLTSASGVGRRLAERIALELKGKVPPHLLAGEKVESEAAEEAVMALAALGFKEAQARAVVLDLLAQNPKARAQDLIKEALKRLR</sequence>
<proteinExistence type="inferred from homology"/>
<protein>
    <recommendedName>
        <fullName evidence="1">Holliday junction branch migration complex subunit RuvA</fullName>
    </recommendedName>
</protein>
<organism>
    <name type="scientific">Thermus thermophilus (strain ATCC BAA-163 / DSM 7039 / HB27)</name>
    <dbReference type="NCBI Taxonomy" id="262724"/>
    <lineage>
        <taxon>Bacteria</taxon>
        <taxon>Thermotogati</taxon>
        <taxon>Deinococcota</taxon>
        <taxon>Deinococci</taxon>
        <taxon>Thermales</taxon>
        <taxon>Thermaceae</taxon>
        <taxon>Thermus</taxon>
    </lineage>
</organism>
<dbReference type="EMBL" id="AE017221">
    <property type="protein sequence ID" value="AAS82038.1"/>
    <property type="molecule type" value="Genomic_DNA"/>
</dbReference>
<dbReference type="RefSeq" id="WP_011174059.1">
    <property type="nucleotide sequence ID" value="NC_005835.1"/>
</dbReference>
<dbReference type="SMR" id="Q72GZ9"/>
<dbReference type="GeneID" id="3168157"/>
<dbReference type="KEGG" id="tth:TT_C1696"/>
<dbReference type="eggNOG" id="COG0632">
    <property type="taxonomic scope" value="Bacteria"/>
</dbReference>
<dbReference type="HOGENOM" id="CLU_087936_3_0_0"/>
<dbReference type="OrthoDB" id="5293449at2"/>
<dbReference type="Proteomes" id="UP000000592">
    <property type="component" value="Chromosome"/>
</dbReference>
<dbReference type="GO" id="GO:0005737">
    <property type="term" value="C:cytoplasm"/>
    <property type="evidence" value="ECO:0007669"/>
    <property type="project" value="UniProtKB-SubCell"/>
</dbReference>
<dbReference type="GO" id="GO:0009379">
    <property type="term" value="C:Holliday junction helicase complex"/>
    <property type="evidence" value="ECO:0007669"/>
    <property type="project" value="InterPro"/>
</dbReference>
<dbReference type="GO" id="GO:0048476">
    <property type="term" value="C:Holliday junction resolvase complex"/>
    <property type="evidence" value="ECO:0007669"/>
    <property type="project" value="UniProtKB-UniRule"/>
</dbReference>
<dbReference type="GO" id="GO:0005524">
    <property type="term" value="F:ATP binding"/>
    <property type="evidence" value="ECO:0007669"/>
    <property type="project" value="InterPro"/>
</dbReference>
<dbReference type="GO" id="GO:0000400">
    <property type="term" value="F:four-way junction DNA binding"/>
    <property type="evidence" value="ECO:0007669"/>
    <property type="project" value="UniProtKB-UniRule"/>
</dbReference>
<dbReference type="GO" id="GO:0009378">
    <property type="term" value="F:four-way junction helicase activity"/>
    <property type="evidence" value="ECO:0007669"/>
    <property type="project" value="InterPro"/>
</dbReference>
<dbReference type="GO" id="GO:0006310">
    <property type="term" value="P:DNA recombination"/>
    <property type="evidence" value="ECO:0007669"/>
    <property type="project" value="UniProtKB-UniRule"/>
</dbReference>
<dbReference type="GO" id="GO:0006281">
    <property type="term" value="P:DNA repair"/>
    <property type="evidence" value="ECO:0007669"/>
    <property type="project" value="UniProtKB-UniRule"/>
</dbReference>
<dbReference type="CDD" id="cd14332">
    <property type="entry name" value="UBA_RuvA_C"/>
    <property type="match status" value="1"/>
</dbReference>
<dbReference type="Gene3D" id="1.10.150.20">
    <property type="entry name" value="5' to 3' exonuclease, C-terminal subdomain"/>
    <property type="match status" value="1"/>
</dbReference>
<dbReference type="Gene3D" id="1.10.8.10">
    <property type="entry name" value="DNA helicase RuvA subunit, C-terminal domain"/>
    <property type="match status" value="1"/>
</dbReference>
<dbReference type="Gene3D" id="2.40.50.140">
    <property type="entry name" value="Nucleic acid-binding proteins"/>
    <property type="match status" value="1"/>
</dbReference>
<dbReference type="HAMAP" id="MF_00031">
    <property type="entry name" value="DNA_HJ_migration_RuvA"/>
    <property type="match status" value="1"/>
</dbReference>
<dbReference type="InterPro" id="IPR013849">
    <property type="entry name" value="DNA_helicase_Holl-junc_RuvA_I"/>
</dbReference>
<dbReference type="InterPro" id="IPR003583">
    <property type="entry name" value="Hlx-hairpin-Hlx_DNA-bd_motif"/>
</dbReference>
<dbReference type="InterPro" id="IPR012340">
    <property type="entry name" value="NA-bd_OB-fold"/>
</dbReference>
<dbReference type="InterPro" id="IPR000085">
    <property type="entry name" value="RuvA"/>
</dbReference>
<dbReference type="InterPro" id="IPR010994">
    <property type="entry name" value="RuvA_2-like"/>
</dbReference>
<dbReference type="InterPro" id="IPR011114">
    <property type="entry name" value="RuvA_C"/>
</dbReference>
<dbReference type="InterPro" id="IPR036267">
    <property type="entry name" value="RuvA_C_sf"/>
</dbReference>
<dbReference type="NCBIfam" id="TIGR00084">
    <property type="entry name" value="ruvA"/>
    <property type="match status" value="1"/>
</dbReference>
<dbReference type="Pfam" id="PF14520">
    <property type="entry name" value="HHH_5"/>
    <property type="match status" value="1"/>
</dbReference>
<dbReference type="Pfam" id="PF07499">
    <property type="entry name" value="RuvA_C"/>
    <property type="match status" value="1"/>
</dbReference>
<dbReference type="Pfam" id="PF01330">
    <property type="entry name" value="RuvA_N"/>
    <property type="match status" value="1"/>
</dbReference>
<dbReference type="SMART" id="SM00278">
    <property type="entry name" value="HhH1"/>
    <property type="match status" value="2"/>
</dbReference>
<dbReference type="SUPFAM" id="SSF46929">
    <property type="entry name" value="DNA helicase RuvA subunit, C-terminal domain"/>
    <property type="match status" value="1"/>
</dbReference>
<dbReference type="SUPFAM" id="SSF50249">
    <property type="entry name" value="Nucleic acid-binding proteins"/>
    <property type="match status" value="1"/>
</dbReference>
<dbReference type="SUPFAM" id="SSF47781">
    <property type="entry name" value="RuvA domain 2-like"/>
    <property type="match status" value="1"/>
</dbReference>
<gene>
    <name evidence="1" type="primary">ruvA</name>
    <name type="ordered locus">TT_C1696</name>
</gene>